<proteinExistence type="inferred from homology"/>
<name>MLTF_PSEPW</name>
<gene>
    <name evidence="1" type="primary">mltF</name>
    <name type="ordered locus">PputW619_4190</name>
</gene>
<evidence type="ECO:0000255" key="1">
    <source>
        <dbReference type="HAMAP-Rule" id="MF_02016"/>
    </source>
</evidence>
<evidence type="ECO:0000256" key="2">
    <source>
        <dbReference type="SAM" id="MobiDB-lite"/>
    </source>
</evidence>
<feature type="signal peptide" evidence="1">
    <location>
        <begin position="1"/>
        <end position="29"/>
    </location>
</feature>
<feature type="chain" id="PRO_0000353965" description="Membrane-bound lytic murein transglycosylase F">
    <location>
        <begin position="30"/>
        <end position="485"/>
    </location>
</feature>
<feature type="region of interest" description="Non-LT domain" evidence="1">
    <location>
        <begin position="30"/>
        <end position="267"/>
    </location>
</feature>
<feature type="region of interest" description="LT domain" evidence="1">
    <location>
        <begin position="268"/>
        <end position="485"/>
    </location>
</feature>
<feature type="region of interest" description="Disordered" evidence="2">
    <location>
        <begin position="465"/>
        <end position="485"/>
    </location>
</feature>
<feature type="active site" evidence="1">
    <location>
        <position position="314"/>
    </location>
</feature>
<sequence>MFAHTALRQRCAKWLFATGLFLLLGACVEKPSTLERVKEDGVLRVITRNSPATYFQDRNGETGFEYELVKRFADDLGVKLEIETADNLDELFDDLGKPSGPVLAAAGLVNSERRKTQARFSHPYLEVTPQVIYRNGRSRPTDPKGLVGKKIMVLKGSSHADQLAELKRRYPGLEYEESDAVEVVDLLRMVDEGQIDLTLVDSNELAMNQVYFPNVRVAFDLGETRNQRWAVAPGEDNSLLNEVNEFLDKSQKNGTLQRLKDRYYGHVDVLGYVGAYTFAQHLQQRLPKYEKYFKSYAKVEQVDWRLLAAIGYQESLWQPEVTSKTGVRGLMMLTQRTAQAMGVSNRLDPRQSIKGGAKYFMLVKQQLDDSIKEPDRTWFALAAYNVGSGHLEDARTLAKREKLNPNKWLDVKKMLPRLSQKQWYRQTKYGYARGGEPVHFVANIRRYYDILTWVTQPQLEGQVAEGNLHVPGVNKDKPAEQSPPM</sequence>
<comment type="function">
    <text evidence="1">Murein-degrading enzyme that degrades murein glycan strands and insoluble, high-molecular weight murein sacculi, with the concomitant formation of a 1,6-anhydromuramoyl product. Lytic transglycosylases (LTs) play an integral role in the metabolism of the peptidoglycan (PG) sacculus. Their lytic action creates space within the PG sacculus to allow for its expansion as well as for the insertion of various structures such as secretion systems and flagella.</text>
</comment>
<comment type="catalytic activity">
    <reaction evidence="1">
        <text>Exolytic cleavage of the (1-&gt;4)-beta-glycosidic linkage between N-acetylmuramic acid (MurNAc) and N-acetylglucosamine (GlcNAc) residues in peptidoglycan, from either the reducing or the non-reducing ends of the peptidoglycan chains, with concomitant formation of a 1,6-anhydrobond in the MurNAc residue.</text>
        <dbReference type="EC" id="4.2.2.n1"/>
    </reaction>
</comment>
<comment type="subcellular location">
    <subcellularLocation>
        <location>Cell outer membrane</location>
        <topology>Peripheral membrane protein</topology>
    </subcellularLocation>
    <text evidence="1">Attached to the inner leaflet of the outer membrane.</text>
</comment>
<comment type="domain">
    <text evidence="1">The N-terminal domain does not have lytic activity and probably modulates enzymatic activity. The C-terminal domain is the catalytic active domain.</text>
</comment>
<comment type="similarity">
    <text evidence="1">In the N-terminal section; belongs to the bacterial solute-binding protein 3 family.</text>
</comment>
<comment type="similarity">
    <text evidence="1">In the C-terminal section; belongs to the transglycosylase Slt family.</text>
</comment>
<keyword id="KW-0998">Cell outer membrane</keyword>
<keyword id="KW-0961">Cell wall biogenesis/degradation</keyword>
<keyword id="KW-0456">Lyase</keyword>
<keyword id="KW-0472">Membrane</keyword>
<keyword id="KW-0732">Signal</keyword>
<protein>
    <recommendedName>
        <fullName evidence="1">Membrane-bound lytic murein transglycosylase F</fullName>
        <ecNumber evidence="1">4.2.2.n1</ecNumber>
    </recommendedName>
    <alternativeName>
        <fullName evidence="1">Murein lyase F</fullName>
    </alternativeName>
</protein>
<dbReference type="EC" id="4.2.2.n1" evidence="1"/>
<dbReference type="EMBL" id="CP000949">
    <property type="protein sequence ID" value="ACA74670.1"/>
    <property type="molecule type" value="Genomic_DNA"/>
</dbReference>
<dbReference type="SMR" id="B1JDH3"/>
<dbReference type="STRING" id="390235.PputW619_4190"/>
<dbReference type="CAZy" id="GH23">
    <property type="family name" value="Glycoside Hydrolase Family 23"/>
</dbReference>
<dbReference type="KEGG" id="ppw:PputW619_4190"/>
<dbReference type="eggNOG" id="COG4623">
    <property type="taxonomic scope" value="Bacteria"/>
</dbReference>
<dbReference type="HOGENOM" id="CLU_027494_0_1_6"/>
<dbReference type="OrthoDB" id="9815002at2"/>
<dbReference type="GO" id="GO:0009279">
    <property type="term" value="C:cell outer membrane"/>
    <property type="evidence" value="ECO:0007669"/>
    <property type="project" value="UniProtKB-SubCell"/>
</dbReference>
<dbReference type="GO" id="GO:0008933">
    <property type="term" value="F:peptidoglycan lytic transglycosylase activity"/>
    <property type="evidence" value="ECO:0007669"/>
    <property type="project" value="UniProtKB-UniRule"/>
</dbReference>
<dbReference type="GO" id="GO:0016998">
    <property type="term" value="P:cell wall macromolecule catabolic process"/>
    <property type="evidence" value="ECO:0007669"/>
    <property type="project" value="UniProtKB-UniRule"/>
</dbReference>
<dbReference type="GO" id="GO:0071555">
    <property type="term" value="P:cell wall organization"/>
    <property type="evidence" value="ECO:0007669"/>
    <property type="project" value="UniProtKB-KW"/>
</dbReference>
<dbReference type="GO" id="GO:0009253">
    <property type="term" value="P:peptidoglycan catabolic process"/>
    <property type="evidence" value="ECO:0007669"/>
    <property type="project" value="TreeGrafter"/>
</dbReference>
<dbReference type="CDD" id="cd13403">
    <property type="entry name" value="MLTF-like"/>
    <property type="match status" value="1"/>
</dbReference>
<dbReference type="CDD" id="cd01009">
    <property type="entry name" value="PBP2_YfhD_N"/>
    <property type="match status" value="1"/>
</dbReference>
<dbReference type="Gene3D" id="1.10.530.10">
    <property type="match status" value="1"/>
</dbReference>
<dbReference type="Gene3D" id="3.40.190.10">
    <property type="entry name" value="Periplasmic binding protein-like II"/>
    <property type="match status" value="2"/>
</dbReference>
<dbReference type="HAMAP" id="MF_02016">
    <property type="entry name" value="MltF"/>
    <property type="match status" value="1"/>
</dbReference>
<dbReference type="InterPro" id="IPR023346">
    <property type="entry name" value="Lysozyme-like_dom_sf"/>
</dbReference>
<dbReference type="InterPro" id="IPR023703">
    <property type="entry name" value="MltF"/>
</dbReference>
<dbReference type="InterPro" id="IPR001638">
    <property type="entry name" value="Solute-binding_3/MltF_N"/>
</dbReference>
<dbReference type="InterPro" id="IPR000189">
    <property type="entry name" value="Transglyc_AS"/>
</dbReference>
<dbReference type="InterPro" id="IPR008258">
    <property type="entry name" value="Transglycosylase_SLT_dom_1"/>
</dbReference>
<dbReference type="NCBIfam" id="NF008112">
    <property type="entry name" value="PRK10859.1"/>
    <property type="match status" value="1"/>
</dbReference>
<dbReference type="PANTHER" id="PTHR35936">
    <property type="entry name" value="MEMBRANE-BOUND LYTIC MUREIN TRANSGLYCOSYLASE F"/>
    <property type="match status" value="1"/>
</dbReference>
<dbReference type="PANTHER" id="PTHR35936:SF32">
    <property type="entry name" value="MEMBRANE-BOUND LYTIC MUREIN TRANSGLYCOSYLASE F"/>
    <property type="match status" value="1"/>
</dbReference>
<dbReference type="Pfam" id="PF00497">
    <property type="entry name" value="SBP_bac_3"/>
    <property type="match status" value="1"/>
</dbReference>
<dbReference type="Pfam" id="PF01464">
    <property type="entry name" value="SLT"/>
    <property type="match status" value="1"/>
</dbReference>
<dbReference type="SMART" id="SM00062">
    <property type="entry name" value="PBPb"/>
    <property type="match status" value="1"/>
</dbReference>
<dbReference type="SUPFAM" id="SSF53955">
    <property type="entry name" value="Lysozyme-like"/>
    <property type="match status" value="1"/>
</dbReference>
<dbReference type="SUPFAM" id="SSF53850">
    <property type="entry name" value="Periplasmic binding protein-like II"/>
    <property type="match status" value="1"/>
</dbReference>
<dbReference type="PROSITE" id="PS00922">
    <property type="entry name" value="TRANSGLYCOSYLASE"/>
    <property type="match status" value="1"/>
</dbReference>
<reference key="1">
    <citation type="submission" date="2008-02" db="EMBL/GenBank/DDBJ databases">
        <title>Complete sequence of Pseudomonas putida W619.</title>
        <authorList>
            <person name="Copeland A."/>
            <person name="Lucas S."/>
            <person name="Lapidus A."/>
            <person name="Barry K."/>
            <person name="Detter J.C."/>
            <person name="Glavina del Rio T."/>
            <person name="Dalin E."/>
            <person name="Tice H."/>
            <person name="Pitluck S."/>
            <person name="Chain P."/>
            <person name="Malfatti S."/>
            <person name="Shin M."/>
            <person name="Vergez L."/>
            <person name="Schmutz J."/>
            <person name="Larimer F."/>
            <person name="Land M."/>
            <person name="Hauser L."/>
            <person name="Kyrpides N."/>
            <person name="Kim E."/>
            <person name="Taghavi S."/>
            <person name="Vangronsveld D."/>
            <person name="van der Lelie D."/>
            <person name="Richardson P."/>
        </authorList>
    </citation>
    <scope>NUCLEOTIDE SEQUENCE [LARGE SCALE GENOMIC DNA]</scope>
    <source>
        <strain>W619</strain>
    </source>
</reference>
<organism>
    <name type="scientific">Pseudomonas putida (strain W619)</name>
    <dbReference type="NCBI Taxonomy" id="390235"/>
    <lineage>
        <taxon>Bacteria</taxon>
        <taxon>Pseudomonadati</taxon>
        <taxon>Pseudomonadota</taxon>
        <taxon>Gammaproteobacteria</taxon>
        <taxon>Pseudomonadales</taxon>
        <taxon>Pseudomonadaceae</taxon>
        <taxon>Pseudomonas</taxon>
    </lineage>
</organism>
<accession>B1JDH3</accession>